<comment type="function">
    <text evidence="1">Catalyzes the interconversion of 2-phosphoglycerate and 3-phosphoglycerate.</text>
</comment>
<comment type="catalytic activity">
    <reaction evidence="1">
        <text>(2R)-2-phosphoglycerate = (2R)-3-phosphoglycerate</text>
        <dbReference type="Rhea" id="RHEA:15901"/>
        <dbReference type="ChEBI" id="CHEBI:58272"/>
        <dbReference type="ChEBI" id="CHEBI:58289"/>
        <dbReference type="EC" id="5.4.2.12"/>
    </reaction>
</comment>
<comment type="pathway">
    <text evidence="1">Carbohydrate degradation; glycolysis; pyruvate from D-glyceraldehyde 3-phosphate: step 3/5.</text>
</comment>
<comment type="similarity">
    <text evidence="1">Belongs to the BPG-independent phosphoglycerate mutase family. A-PGAM subfamily.</text>
</comment>
<name>APGM_THEM4</name>
<sequence length="402" mass="44645">MIDRQQILNELISPNSSKIVLLVMDGIGDIPGEDGLTPLQKANTPKLDELAKQSDLGQTIPVLPGITPGSGPGHLGIFGYDPLKYQIGRGILEALGIDVEVGEKDLVARGNFATLEGDIIVDRRAGRPSSEESAKVVEILNENIHKIEDVEVKFYPGKEHRFVVKLTGEGLYDKLEDADPQKEGKPIKYTKALDESSKKSEKIINILIDRIKEVLKDQQKMNFALLRGFSKYPNLPSFGDVYKLRPAAIAVYPMYKGLAKLVGMEILKTGQTIEDEFKTVKENWEKYDFFYVHVKKTDSYGEDGNFESKVKVIEEVDKNLGLLLELKPDVLIVTGDHSTPCAMKGHSFHPVPLMIYSKFTRKGLSKLYNEFECARGTLGTIPAVDVMSLALAYAGRLEKYGA</sequence>
<protein>
    <recommendedName>
        <fullName evidence="1">Probable 2,3-bisphosphoglycerate-independent phosphoglycerate mutase</fullName>
        <shortName evidence="1">BPG-independent PGAM</shortName>
        <shortName evidence="1">Phosphoglyceromutase</shortName>
        <shortName evidence="1">aPGAM</shortName>
        <ecNumber evidence="1">5.4.2.12</ecNumber>
    </recommendedName>
</protein>
<organism>
    <name type="scientific">Thermosipho melanesiensis (strain DSM 12029 / CIP 104789 / BI429)</name>
    <dbReference type="NCBI Taxonomy" id="391009"/>
    <lineage>
        <taxon>Bacteria</taxon>
        <taxon>Thermotogati</taxon>
        <taxon>Thermotogota</taxon>
        <taxon>Thermotogae</taxon>
        <taxon>Thermotogales</taxon>
        <taxon>Fervidobacteriaceae</taxon>
        <taxon>Thermosipho</taxon>
    </lineage>
</organism>
<keyword id="KW-0324">Glycolysis</keyword>
<keyword id="KW-0413">Isomerase</keyword>
<gene>
    <name evidence="1" type="primary">apgM</name>
    <name type="ordered locus">Tmel_1409</name>
</gene>
<proteinExistence type="inferred from homology"/>
<dbReference type="EC" id="5.4.2.12" evidence="1"/>
<dbReference type="EMBL" id="CP000716">
    <property type="protein sequence ID" value="ABR31256.1"/>
    <property type="molecule type" value="Genomic_DNA"/>
</dbReference>
<dbReference type="RefSeq" id="WP_012057615.1">
    <property type="nucleotide sequence ID" value="NC_009616.1"/>
</dbReference>
<dbReference type="SMR" id="A6LMV5"/>
<dbReference type="STRING" id="391009.Tmel_1409"/>
<dbReference type="KEGG" id="tme:Tmel_1409"/>
<dbReference type="eggNOG" id="COG3635">
    <property type="taxonomic scope" value="Bacteria"/>
</dbReference>
<dbReference type="HOGENOM" id="CLU_034906_2_0_0"/>
<dbReference type="OrthoDB" id="9804453at2"/>
<dbReference type="UniPathway" id="UPA00109">
    <property type="reaction ID" value="UER00186"/>
</dbReference>
<dbReference type="Proteomes" id="UP000001110">
    <property type="component" value="Chromosome"/>
</dbReference>
<dbReference type="GO" id="GO:0046872">
    <property type="term" value="F:metal ion binding"/>
    <property type="evidence" value="ECO:0007669"/>
    <property type="project" value="InterPro"/>
</dbReference>
<dbReference type="GO" id="GO:0004619">
    <property type="term" value="F:phosphoglycerate mutase activity"/>
    <property type="evidence" value="ECO:0007669"/>
    <property type="project" value="UniProtKB-EC"/>
</dbReference>
<dbReference type="GO" id="GO:0006096">
    <property type="term" value="P:glycolytic process"/>
    <property type="evidence" value="ECO:0007669"/>
    <property type="project" value="UniProtKB-UniRule"/>
</dbReference>
<dbReference type="CDD" id="cd16011">
    <property type="entry name" value="iPGM_like"/>
    <property type="match status" value="1"/>
</dbReference>
<dbReference type="Gene3D" id="3.40.720.10">
    <property type="entry name" value="Alkaline Phosphatase, subunit A"/>
    <property type="match status" value="1"/>
</dbReference>
<dbReference type="Gene3D" id="3.30.70.2130">
    <property type="entry name" value="Metalloenzyme domain"/>
    <property type="match status" value="1"/>
</dbReference>
<dbReference type="HAMAP" id="MF_01402_B">
    <property type="entry name" value="ApgM_B"/>
    <property type="match status" value="1"/>
</dbReference>
<dbReference type="InterPro" id="IPR017850">
    <property type="entry name" value="Alkaline_phosphatase_core_sf"/>
</dbReference>
<dbReference type="InterPro" id="IPR023665">
    <property type="entry name" value="ApgAM_prokaryotes"/>
</dbReference>
<dbReference type="InterPro" id="IPR006124">
    <property type="entry name" value="Metalloenzyme"/>
</dbReference>
<dbReference type="InterPro" id="IPR004456">
    <property type="entry name" value="Pglycerate_mutase_ApgM"/>
</dbReference>
<dbReference type="InterPro" id="IPR042253">
    <property type="entry name" value="Pglycerate_mutase_ApgM_sf"/>
</dbReference>
<dbReference type="NCBIfam" id="TIGR00306">
    <property type="entry name" value="apgM"/>
    <property type="match status" value="1"/>
</dbReference>
<dbReference type="NCBIfam" id="NF003160">
    <property type="entry name" value="PRK04135.1"/>
    <property type="match status" value="1"/>
</dbReference>
<dbReference type="PANTHER" id="PTHR31209">
    <property type="entry name" value="COFACTOR-INDEPENDENT PHOSPHOGLYCERATE MUTASE"/>
    <property type="match status" value="1"/>
</dbReference>
<dbReference type="PANTHER" id="PTHR31209:SF0">
    <property type="entry name" value="METALLOENZYME DOMAIN-CONTAINING PROTEIN"/>
    <property type="match status" value="1"/>
</dbReference>
<dbReference type="Pfam" id="PF01676">
    <property type="entry name" value="Metalloenzyme"/>
    <property type="match status" value="1"/>
</dbReference>
<dbReference type="Pfam" id="PF10143">
    <property type="entry name" value="PhosphMutase"/>
    <property type="match status" value="1"/>
</dbReference>
<dbReference type="PIRSF" id="PIRSF006392">
    <property type="entry name" value="IPGAM_arch"/>
    <property type="match status" value="1"/>
</dbReference>
<dbReference type="SUPFAM" id="SSF53649">
    <property type="entry name" value="Alkaline phosphatase-like"/>
    <property type="match status" value="1"/>
</dbReference>
<accession>A6LMV5</accession>
<feature type="chain" id="PRO_1000068385" description="Probable 2,3-bisphosphoglycerate-independent phosphoglycerate mutase">
    <location>
        <begin position="1"/>
        <end position="402"/>
    </location>
</feature>
<evidence type="ECO:0000255" key="1">
    <source>
        <dbReference type="HAMAP-Rule" id="MF_01402"/>
    </source>
</evidence>
<reference key="1">
    <citation type="submission" date="2007-05" db="EMBL/GenBank/DDBJ databases">
        <title>Complete sequence of Thermosipho melanesiensis BI429.</title>
        <authorList>
            <consortium name="US DOE Joint Genome Institute"/>
            <person name="Copeland A."/>
            <person name="Lucas S."/>
            <person name="Lapidus A."/>
            <person name="Barry K."/>
            <person name="Glavina del Rio T."/>
            <person name="Dalin E."/>
            <person name="Tice H."/>
            <person name="Pitluck S."/>
            <person name="Chertkov O."/>
            <person name="Brettin T."/>
            <person name="Bruce D."/>
            <person name="Detter J.C."/>
            <person name="Han C."/>
            <person name="Schmutz J."/>
            <person name="Larimer F."/>
            <person name="Land M."/>
            <person name="Hauser L."/>
            <person name="Kyrpides N."/>
            <person name="Mikhailova N."/>
            <person name="Nelson K."/>
            <person name="Gogarten J.P."/>
            <person name="Noll K."/>
            <person name="Richardson P."/>
        </authorList>
    </citation>
    <scope>NUCLEOTIDE SEQUENCE [LARGE SCALE GENOMIC DNA]</scope>
    <source>
        <strain>DSM 12029 / CIP 104789 / BI429</strain>
    </source>
</reference>